<feature type="signal peptide" evidence="1">
    <location>
        <begin position="1"/>
        <end position="25"/>
    </location>
</feature>
<feature type="chain" id="PRO_5007659748" description="RxLR effector protein Avh6">
    <location>
        <begin position="26"/>
        <end position="125"/>
    </location>
</feature>
<feature type="short sequence motif" description="RxLR-dEER" evidence="8">
    <location>
        <begin position="48"/>
        <end position="70"/>
    </location>
</feature>
<proteinExistence type="evidence at protein level"/>
<dbReference type="EMBL" id="JN253642">
    <property type="protein sequence ID" value="AEK80455.1"/>
    <property type="molecule type" value="Genomic_DNA"/>
</dbReference>
<dbReference type="EMBL" id="KC004058">
    <property type="protein sequence ID" value="AGC92779.1"/>
    <property type="molecule type" value="Genomic_DNA"/>
</dbReference>
<dbReference type="VEuPathDB" id="FungiDB:PHYSODRAFT_354880"/>
<dbReference type="GO" id="GO:0005576">
    <property type="term" value="C:extracellular region"/>
    <property type="evidence" value="ECO:0007669"/>
    <property type="project" value="UniProtKB-SubCell"/>
</dbReference>
<dbReference type="GO" id="GO:0043657">
    <property type="term" value="C:host cell"/>
    <property type="evidence" value="ECO:0007669"/>
    <property type="project" value="UniProtKB-SubCell"/>
</dbReference>
<dbReference type="InterPro" id="IPR031825">
    <property type="entry name" value="RXLR"/>
</dbReference>
<dbReference type="Pfam" id="PF16810">
    <property type="entry name" value="RXLR"/>
    <property type="match status" value="1"/>
</dbReference>
<accession>G1FQR7</accession>
<reference key="1">
    <citation type="journal article" date="2011" name="Plant Cell">
        <title>Transcriptional programming and functional interactions within the Phytophthora sojae RXLR effector repertoire.</title>
        <authorList>
            <person name="Wang Q."/>
            <person name="Han C."/>
            <person name="Ferreira A.O."/>
            <person name="Yu X."/>
            <person name="Ye W."/>
            <person name="Tripathy S."/>
            <person name="Kale S.D."/>
            <person name="Gu B."/>
            <person name="Sheng Y."/>
            <person name="Sui Y."/>
            <person name="Wang X."/>
            <person name="Zhang Z."/>
            <person name="Cheng B."/>
            <person name="Dong S."/>
            <person name="Shan W."/>
            <person name="Zheng X."/>
            <person name="Dou D."/>
            <person name="Tyler B.M."/>
            <person name="Wang Y."/>
        </authorList>
    </citation>
    <scope>NUCLEOTIDE SEQUENCE [GENOMIC DNA]</scope>
    <scope>IDENTIFICATION</scope>
    <scope>FUNCTION</scope>
    <scope>INDUCTION</scope>
    <scope>DOMAIN</scope>
    <source>
        <strain>P7064</strain>
    </source>
</reference>
<reference key="2">
    <citation type="journal article" date="2013" name="Mol. Plant Microbe Interact.">
        <title>Deletion of the Phytophthora sojae avirulence gene Avr1d causes gain of virulence on Rps1d.</title>
        <authorList>
            <person name="Na R."/>
            <person name="Yu D."/>
            <person name="Qutob D."/>
            <person name="Zhao J."/>
            <person name="Gijzen M."/>
        </authorList>
    </citation>
    <scope>NUCLEOTIDE SEQUENCE [GENOMIC DNA]</scope>
    <scope>FUNCTION</scope>
    <scope>DISRUPTION PHENOTYPE</scope>
    <scope>PTDINS(4)P-BINDING</scope>
    <scope>MUTAGENESIS OF 48-ARG--ARG-51</scope>
    <source>
        <strain>P7064</strain>
    </source>
</reference>
<reference key="3">
    <citation type="journal article" date="2013" name="Mol. Plant Microbe Interact.">
        <title>The Phytophthora sojae Avr1d gene encodes an RxLR-dEER effector with presence and absence polymorphisms among pathogen strains.</title>
        <authorList>
            <person name="Yin W."/>
            <person name="Dong S."/>
            <person name="Zhai L."/>
            <person name="Lin Y."/>
            <person name="Zheng X."/>
            <person name="Wang Y."/>
        </authorList>
    </citation>
    <scope>FUNCTION</scope>
    <scope>INDUCTION</scope>
</reference>
<name>AVH6_PHYSO</name>
<evidence type="ECO:0000255" key="1"/>
<evidence type="ECO:0000269" key="2">
    <source>
    </source>
</evidence>
<evidence type="ECO:0000269" key="3">
    <source>
    </source>
</evidence>
<evidence type="ECO:0000269" key="4">
    <source>
    </source>
</evidence>
<evidence type="ECO:0000303" key="5">
    <source>
    </source>
</evidence>
<evidence type="ECO:0000303" key="6">
    <source>
    </source>
</evidence>
<evidence type="ECO:0000305" key="7"/>
<evidence type="ECO:0000305" key="8">
    <source>
    </source>
</evidence>
<evidence type="ECO:0000305" key="9">
    <source>
    </source>
</evidence>
<protein>
    <recommendedName>
        <fullName evidence="6">RxLR effector protein Avh6</fullName>
    </recommendedName>
    <alternativeName>
        <fullName evidence="6">Avirulence homolog protein 6</fullName>
    </alternativeName>
    <alternativeName>
        <fullName evidence="6">Avirulence protein 1d</fullName>
    </alternativeName>
</protein>
<gene>
    <name evidence="5" type="primary">Avh6</name>
    <name evidence="6" type="synonym">Avh6-2</name>
    <name evidence="6" type="synonym">Avr1d</name>
</gene>
<comment type="function">
    <text evidence="2 3 4">Effector that suppresses plant defense responses during the early stages of pathogen infection. Suppresses cell death induced by effectors and PAMPs in plant hosts (PubMed:21653195, PubMed:23550527). Triggers a hypersensitive response (HR) in the presence of Rps1d (PubMed:23550527, PubMed:23594349). Suppresses BAX-induced cell death and enhanced P.capsici infection in Nicotiana benthamiana. Also suppresses effector-triggered immunity induction by associating with Avr1b and Rps1b, suggesting a role in suppressing plant immunity (PubMed:23594349).</text>
</comment>
<comment type="subcellular location">
    <subcellularLocation>
        <location evidence="8">Secreted</location>
    </subcellularLocation>
    <subcellularLocation>
        <location evidence="8">Host cell</location>
    </subcellularLocation>
</comment>
<comment type="induction">
    <text evidence="2 4">Expression is strongly up-regulated during the early stages of infection.</text>
</comment>
<comment type="domain">
    <text evidence="8">The RxLR-dEER motif acts to carry the protein into the host cell cytoplasm through binding to cell surface phosphatidylinositol-3-phosphate.</text>
</comment>
<comment type="disruption phenotype">
    <text evidence="3">Leads to the gain of virulence via impairing effector-triggered immunity (ETI) allowed by host resistance (R) protein Rps1d.</text>
</comment>
<comment type="miscellaneous">
    <text evidence="9">Avh6 is present in P.sojae strains that are avirulent on Rps1d hosts, whereas the gene is deleted from the genome of virulent strains.</text>
</comment>
<comment type="similarity">
    <text evidence="7">Belongs to the RxLR effector family.</text>
</comment>
<organism>
    <name type="scientific">Phytophthora sojae</name>
    <name type="common">Soybean stem and root rot agent</name>
    <name type="synonym">Phytophthora megasperma f. sp. glycines</name>
    <dbReference type="NCBI Taxonomy" id="67593"/>
    <lineage>
        <taxon>Eukaryota</taxon>
        <taxon>Sar</taxon>
        <taxon>Stramenopiles</taxon>
        <taxon>Oomycota</taxon>
        <taxon>Peronosporales</taxon>
        <taxon>Peronosporaceae</taxon>
        <taxon>Phytophthora</taxon>
    </lineage>
</organism>
<sequence>MRLSSTTFVVLAAVLLASGTAVSKADETGVTNVNAVHSPNVLAGVDKRFLRSHHTEDGKAKLSNYDNEERNGLFAAGTLSDMANDMIFRFKMFTKWKANGHLPKAIKKDIPRSLYKAYKIHHRMN</sequence>
<keyword id="KW-0964">Secreted</keyword>
<keyword id="KW-0732">Signal</keyword>
<keyword id="KW-0843">Virulence</keyword>